<feature type="chain" id="PRO_0000241308" description="Large ribosomal subunit protein uL3">
    <location>
        <begin position="1"/>
        <end position="221"/>
    </location>
</feature>
<feature type="region of interest" description="Disordered" evidence="2">
    <location>
        <begin position="123"/>
        <end position="156"/>
    </location>
</feature>
<evidence type="ECO:0000255" key="1">
    <source>
        <dbReference type="HAMAP-Rule" id="MF_01325"/>
    </source>
</evidence>
<evidence type="ECO:0000256" key="2">
    <source>
        <dbReference type="SAM" id="MobiDB-lite"/>
    </source>
</evidence>
<evidence type="ECO:0000305" key="3"/>
<name>RL3_AYWBP</name>
<protein>
    <recommendedName>
        <fullName evidence="1">Large ribosomal subunit protein uL3</fullName>
    </recommendedName>
    <alternativeName>
        <fullName evidence="3">50S ribosomal protein L3</fullName>
    </alternativeName>
</protein>
<keyword id="KW-0687">Ribonucleoprotein</keyword>
<keyword id="KW-0689">Ribosomal protein</keyword>
<keyword id="KW-0694">RNA-binding</keyword>
<keyword id="KW-0699">rRNA-binding</keyword>
<proteinExistence type="inferred from homology"/>
<accession>Q2NIV4</accession>
<sequence>MAQGILGKKIGMTQVFNEQGELVPVTIVDVAANVVLQQKNVDQDGYQATQIGFCDKREKNTSKPMLGHFKKATTAPKRFIKEINFSSDVNSNLANLVVGALITNDLFQVGDLVDVTGTSKGKGFAGSIKRHNQSRGPESHGSRYHRRPGSMGPIKGKLKGKKLPGHMGYETVTIQNLAILSIDTEKNLFLIKGNVPGPNKGFVMIKSAVKKLTKEQTHAKN</sequence>
<comment type="function">
    <text evidence="1">One of the primary rRNA binding proteins, it binds directly near the 3'-end of the 23S rRNA, where it nucleates assembly of the 50S subunit.</text>
</comment>
<comment type="subunit">
    <text evidence="1">Part of the 50S ribosomal subunit. Forms a cluster with proteins L14 and L19.</text>
</comment>
<comment type="similarity">
    <text evidence="1">Belongs to the universal ribosomal protein uL3 family.</text>
</comment>
<organism>
    <name type="scientific">Aster yellows witches'-broom phytoplasma (strain AYWB)</name>
    <dbReference type="NCBI Taxonomy" id="322098"/>
    <lineage>
        <taxon>Bacteria</taxon>
        <taxon>Bacillati</taxon>
        <taxon>Mycoplasmatota</taxon>
        <taxon>Mollicutes</taxon>
        <taxon>Acholeplasmatales</taxon>
        <taxon>Acholeplasmataceae</taxon>
        <taxon>Candidatus Phytoplasma</taxon>
        <taxon>16SrI (Aster yellows group)</taxon>
    </lineage>
</organism>
<dbReference type="EMBL" id="CP000061">
    <property type="protein sequence ID" value="ABC65639.1"/>
    <property type="molecule type" value="Genomic_DNA"/>
</dbReference>
<dbReference type="RefSeq" id="WP_011412801.1">
    <property type="nucleotide sequence ID" value="NC_007716.1"/>
</dbReference>
<dbReference type="SMR" id="Q2NIV4"/>
<dbReference type="STRING" id="322098.AYWB_522"/>
<dbReference type="KEGG" id="ayw:AYWB_522"/>
<dbReference type="eggNOG" id="COG0087">
    <property type="taxonomic scope" value="Bacteria"/>
</dbReference>
<dbReference type="HOGENOM" id="CLU_044142_4_1_14"/>
<dbReference type="OrthoDB" id="9806135at2"/>
<dbReference type="PhylomeDB" id="Q2NIV4"/>
<dbReference type="Proteomes" id="UP000001934">
    <property type="component" value="Chromosome"/>
</dbReference>
<dbReference type="GO" id="GO:0022625">
    <property type="term" value="C:cytosolic large ribosomal subunit"/>
    <property type="evidence" value="ECO:0007669"/>
    <property type="project" value="TreeGrafter"/>
</dbReference>
<dbReference type="GO" id="GO:0019843">
    <property type="term" value="F:rRNA binding"/>
    <property type="evidence" value="ECO:0007669"/>
    <property type="project" value="UniProtKB-UniRule"/>
</dbReference>
<dbReference type="GO" id="GO:0003735">
    <property type="term" value="F:structural constituent of ribosome"/>
    <property type="evidence" value="ECO:0007669"/>
    <property type="project" value="InterPro"/>
</dbReference>
<dbReference type="GO" id="GO:0006412">
    <property type="term" value="P:translation"/>
    <property type="evidence" value="ECO:0007669"/>
    <property type="project" value="UniProtKB-UniRule"/>
</dbReference>
<dbReference type="FunFam" id="2.40.30.10:FF:000004">
    <property type="entry name" value="50S ribosomal protein L3"/>
    <property type="match status" value="1"/>
</dbReference>
<dbReference type="FunFam" id="3.30.160.810:FF:000001">
    <property type="entry name" value="50S ribosomal protein L3"/>
    <property type="match status" value="1"/>
</dbReference>
<dbReference type="Gene3D" id="3.30.160.810">
    <property type="match status" value="1"/>
</dbReference>
<dbReference type="Gene3D" id="2.40.30.10">
    <property type="entry name" value="Translation factors"/>
    <property type="match status" value="1"/>
</dbReference>
<dbReference type="HAMAP" id="MF_01325_B">
    <property type="entry name" value="Ribosomal_uL3_B"/>
    <property type="match status" value="1"/>
</dbReference>
<dbReference type="InterPro" id="IPR000597">
    <property type="entry name" value="Ribosomal_uL3"/>
</dbReference>
<dbReference type="InterPro" id="IPR019927">
    <property type="entry name" value="Ribosomal_uL3_bac/org-type"/>
</dbReference>
<dbReference type="InterPro" id="IPR019926">
    <property type="entry name" value="Ribosomal_uL3_CS"/>
</dbReference>
<dbReference type="InterPro" id="IPR009000">
    <property type="entry name" value="Transl_B-barrel_sf"/>
</dbReference>
<dbReference type="NCBIfam" id="TIGR03625">
    <property type="entry name" value="L3_bact"/>
    <property type="match status" value="1"/>
</dbReference>
<dbReference type="PANTHER" id="PTHR11229">
    <property type="entry name" value="50S RIBOSOMAL PROTEIN L3"/>
    <property type="match status" value="1"/>
</dbReference>
<dbReference type="PANTHER" id="PTHR11229:SF16">
    <property type="entry name" value="LARGE RIBOSOMAL SUBUNIT PROTEIN UL3C"/>
    <property type="match status" value="1"/>
</dbReference>
<dbReference type="Pfam" id="PF00297">
    <property type="entry name" value="Ribosomal_L3"/>
    <property type="match status" value="1"/>
</dbReference>
<dbReference type="SUPFAM" id="SSF50447">
    <property type="entry name" value="Translation proteins"/>
    <property type="match status" value="1"/>
</dbReference>
<dbReference type="PROSITE" id="PS00474">
    <property type="entry name" value="RIBOSOMAL_L3"/>
    <property type="match status" value="1"/>
</dbReference>
<reference key="1">
    <citation type="journal article" date="2006" name="J. Bacteriol.">
        <title>Living with genome instability: the adaptation of phytoplasmas to diverse environments of their insect and plant hosts.</title>
        <authorList>
            <person name="Bai X."/>
            <person name="Zhang J."/>
            <person name="Ewing A."/>
            <person name="Miller S.A."/>
            <person name="Jancso Radek A."/>
            <person name="Shevchenko D.V."/>
            <person name="Tsukerman K."/>
            <person name="Walunas T."/>
            <person name="Lapidus A."/>
            <person name="Campbell J.W."/>
            <person name="Hogenhout S.A."/>
        </authorList>
    </citation>
    <scope>NUCLEOTIDE SEQUENCE [LARGE SCALE GENOMIC DNA]</scope>
    <source>
        <strain>AYWB</strain>
    </source>
</reference>
<gene>
    <name evidence="1" type="primary">rplC</name>
    <name type="ordered locus">AYWB_522</name>
</gene>